<proteinExistence type="evidence at protein level"/>
<dbReference type="EMBL" id="U82664">
    <property type="protein sequence ID" value="AAB40242.1"/>
    <property type="molecule type" value="Genomic_DNA"/>
</dbReference>
<dbReference type="EMBL" id="U00096">
    <property type="protein sequence ID" value="AAC73590.2"/>
    <property type="molecule type" value="Genomic_DNA"/>
</dbReference>
<dbReference type="EMBL" id="AP009048">
    <property type="protein sequence ID" value="BAE76267.1"/>
    <property type="status" value="ALT_INIT"/>
    <property type="molecule type" value="Genomic_DNA"/>
</dbReference>
<dbReference type="PIR" id="G64779">
    <property type="entry name" value="G64779"/>
</dbReference>
<dbReference type="RefSeq" id="NP_415021.2">
    <property type="nucleotide sequence ID" value="NC_000913.3"/>
</dbReference>
<dbReference type="RefSeq" id="WP_000970323.1">
    <property type="nucleotide sequence ID" value="NZ_STEB01000007.1"/>
</dbReference>
<dbReference type="PDB" id="8Z5G">
    <property type="method" value="EM"/>
    <property type="resolution" value="2.90 A"/>
    <property type="chains" value="AA/AB/B/CA/D/EA/F/GA/H/IA/J/KA/L/MA/N/OA/P/QA/R/SA/T/UA/W/WA/Y/YA=1-152"/>
</dbReference>
<dbReference type="PDBsum" id="8Z5G"/>
<dbReference type="EMDB" id="EMD-39773"/>
<dbReference type="SMR" id="P0AAS3"/>
<dbReference type="BioGRID" id="4261106">
    <property type="interactions" value="7"/>
</dbReference>
<dbReference type="FunCoup" id="P0AAS3">
    <property type="interactions" value="50"/>
</dbReference>
<dbReference type="STRING" id="511145.b0488"/>
<dbReference type="PaxDb" id="511145-b0488"/>
<dbReference type="EnsemblBacteria" id="AAC73590">
    <property type="protein sequence ID" value="AAC73590"/>
    <property type="gene ID" value="b0488"/>
</dbReference>
<dbReference type="GeneID" id="945126"/>
<dbReference type="KEGG" id="ecj:JW5065"/>
<dbReference type="KEGG" id="eco:b0488"/>
<dbReference type="KEGG" id="ecoc:C3026_02400"/>
<dbReference type="PATRIC" id="fig|1411691.4.peg.1788"/>
<dbReference type="EchoBASE" id="EB3045"/>
<dbReference type="eggNOG" id="COG1585">
    <property type="taxonomic scope" value="Bacteria"/>
</dbReference>
<dbReference type="HOGENOM" id="CLU_116732_4_0_6"/>
<dbReference type="InParanoid" id="P0AAS3"/>
<dbReference type="OMA" id="FWDSAFW"/>
<dbReference type="OrthoDB" id="6402862at2"/>
<dbReference type="PhylomeDB" id="P0AAS3"/>
<dbReference type="BioCyc" id="EcoCyc:G6264-MONOMER"/>
<dbReference type="PRO" id="PR:P0AAS3"/>
<dbReference type="Proteomes" id="UP000000625">
    <property type="component" value="Chromosome"/>
</dbReference>
<dbReference type="GO" id="GO:0005886">
    <property type="term" value="C:plasma membrane"/>
    <property type="evidence" value="ECO:0000314"/>
    <property type="project" value="EcoCyc"/>
</dbReference>
<dbReference type="FunFam" id="2.40.50.140:FF:000118">
    <property type="entry name" value="NfeD family protein"/>
    <property type="match status" value="1"/>
</dbReference>
<dbReference type="Gene3D" id="2.40.50.140">
    <property type="entry name" value="Nucleic acid-binding proteins"/>
    <property type="match status" value="1"/>
</dbReference>
<dbReference type="InterPro" id="IPR052165">
    <property type="entry name" value="Membrane_assoc_protease"/>
</dbReference>
<dbReference type="InterPro" id="IPR012340">
    <property type="entry name" value="NA-bd_OB-fold"/>
</dbReference>
<dbReference type="InterPro" id="IPR002810">
    <property type="entry name" value="NfeD-like_C"/>
</dbReference>
<dbReference type="PANTHER" id="PTHR33507">
    <property type="entry name" value="INNER MEMBRANE PROTEIN YBBJ"/>
    <property type="match status" value="1"/>
</dbReference>
<dbReference type="PANTHER" id="PTHR33507:SF3">
    <property type="entry name" value="INNER MEMBRANE PROTEIN YBBJ"/>
    <property type="match status" value="1"/>
</dbReference>
<dbReference type="Pfam" id="PF01957">
    <property type="entry name" value="NfeD"/>
    <property type="match status" value="1"/>
</dbReference>
<dbReference type="SUPFAM" id="SSF141322">
    <property type="entry name" value="NfeD domain-like"/>
    <property type="match status" value="1"/>
</dbReference>
<comment type="subcellular location">
    <subcellularLocation>
        <location>Cell inner membrane</location>
        <topology>Multi-pass membrane protein</topology>
    </subcellularLocation>
</comment>
<comment type="similarity">
    <text evidence="2">To M.jannaschii MJ0826.</text>
</comment>
<comment type="sequence caution" evidence="2">
    <conflict type="erroneous initiation">
        <sequence resource="EMBL-CDS" id="BAE76267"/>
    </conflict>
</comment>
<accession>P0AAS3</accession>
<accession>P75709</accession>
<accession>P77124</accession>
<accession>Q2MBT9</accession>
<keyword id="KW-0002">3D-structure</keyword>
<keyword id="KW-0997">Cell inner membrane</keyword>
<keyword id="KW-1003">Cell membrane</keyword>
<keyword id="KW-0472">Membrane</keyword>
<keyword id="KW-1185">Reference proteome</keyword>
<keyword id="KW-0812">Transmembrane</keyword>
<keyword id="KW-1133">Transmembrane helix</keyword>
<protein>
    <recommendedName>
        <fullName>Inner membrane protein YbbJ</fullName>
    </recommendedName>
</protein>
<reference key="1">
    <citation type="submission" date="1997-01" db="EMBL/GenBank/DDBJ databases">
        <title>Sequence of minutes 4-25 of Escherichia coli.</title>
        <authorList>
            <person name="Chung E."/>
            <person name="Allen E."/>
            <person name="Araujo R."/>
            <person name="Aparicio A.M."/>
            <person name="Davis K."/>
            <person name="Duncan M."/>
            <person name="Federspiel N."/>
            <person name="Hyman R."/>
            <person name="Kalman S."/>
            <person name="Komp C."/>
            <person name="Kurdi O."/>
            <person name="Lew H."/>
            <person name="Lin D."/>
            <person name="Namath A."/>
            <person name="Oefner P."/>
            <person name="Roberts D."/>
            <person name="Schramm S."/>
            <person name="Davis R.W."/>
        </authorList>
    </citation>
    <scope>NUCLEOTIDE SEQUENCE [LARGE SCALE GENOMIC DNA]</scope>
    <source>
        <strain>K12 / MG1655 / ATCC 47076</strain>
    </source>
</reference>
<reference key="2">
    <citation type="journal article" date="1997" name="Science">
        <title>The complete genome sequence of Escherichia coli K-12.</title>
        <authorList>
            <person name="Blattner F.R."/>
            <person name="Plunkett G. III"/>
            <person name="Bloch C.A."/>
            <person name="Perna N.T."/>
            <person name="Burland V."/>
            <person name="Riley M."/>
            <person name="Collado-Vides J."/>
            <person name="Glasner J.D."/>
            <person name="Rode C.K."/>
            <person name="Mayhew G.F."/>
            <person name="Gregor J."/>
            <person name="Davis N.W."/>
            <person name="Kirkpatrick H.A."/>
            <person name="Goeden M.A."/>
            <person name="Rose D.J."/>
            <person name="Mau B."/>
            <person name="Shao Y."/>
        </authorList>
    </citation>
    <scope>NUCLEOTIDE SEQUENCE [LARGE SCALE GENOMIC DNA]</scope>
    <source>
        <strain>K12 / MG1655 / ATCC 47076</strain>
    </source>
</reference>
<reference key="3">
    <citation type="journal article" date="2006" name="Mol. Syst. Biol.">
        <title>Highly accurate genome sequences of Escherichia coli K-12 strains MG1655 and W3110.</title>
        <authorList>
            <person name="Hayashi K."/>
            <person name="Morooka N."/>
            <person name="Yamamoto Y."/>
            <person name="Fujita K."/>
            <person name="Isono K."/>
            <person name="Choi S."/>
            <person name="Ohtsubo E."/>
            <person name="Baba T."/>
            <person name="Wanner B.L."/>
            <person name="Mori H."/>
            <person name="Horiuchi T."/>
        </authorList>
    </citation>
    <scope>NUCLEOTIDE SEQUENCE [LARGE SCALE GENOMIC DNA]</scope>
    <source>
        <strain>K12 / W3110 / ATCC 27325 / DSM 5911</strain>
    </source>
</reference>
<reference key="4">
    <citation type="journal article" date="2005" name="Science">
        <title>Global topology analysis of the Escherichia coli inner membrane proteome.</title>
        <authorList>
            <person name="Daley D.O."/>
            <person name="Rapp M."/>
            <person name="Granseth E."/>
            <person name="Melen K."/>
            <person name="Drew D."/>
            <person name="von Heijne G."/>
        </authorList>
    </citation>
    <scope>TOPOLOGY [LARGE SCALE ANALYSIS]</scope>
    <source>
        <strain>K12 / MG1655 / ATCC 47076</strain>
    </source>
</reference>
<evidence type="ECO:0000255" key="1"/>
<evidence type="ECO:0000305" key="2"/>
<name>YBBJ_ECOLI</name>
<feature type="chain" id="PRO_0000168638" description="Inner membrane protein YbbJ">
    <location>
        <begin position="1"/>
        <end position="152"/>
    </location>
</feature>
<feature type="transmembrane region" description="Helical" evidence="1">
    <location>
        <begin position="1"/>
        <end position="21"/>
    </location>
</feature>
<feature type="topological domain" description="Cytoplasmic" evidence="1">
    <location>
        <begin position="22"/>
        <end position="31"/>
    </location>
</feature>
<feature type="transmembrane region" description="Helical" evidence="1">
    <location>
        <begin position="32"/>
        <end position="52"/>
    </location>
</feature>
<feature type="topological domain" description="Periplasmic" evidence="1">
    <location>
        <begin position="53"/>
        <end position="54"/>
    </location>
</feature>
<feature type="transmembrane region" description="Helical" evidence="1">
    <location>
        <begin position="55"/>
        <end position="75"/>
    </location>
</feature>
<feature type="topological domain" description="Cytoplasmic" evidence="1">
    <location>
        <begin position="76"/>
        <end position="152"/>
    </location>
</feature>
<sequence>MMELMVVHPHIFWLSLGGLLLAAEMLGGNGYLLWSGVAAVITGLVVWLVPLGWEWQGVMFAILTLLAAWLWWKWLSRRVREQKHSDSHLNQRGQQLIGRRFVLESPLVNGRGHMRVGDSSWPVSASEDLGAGTHVEVIAIEGITLHIRAVSS</sequence>
<organism>
    <name type="scientific">Escherichia coli (strain K12)</name>
    <dbReference type="NCBI Taxonomy" id="83333"/>
    <lineage>
        <taxon>Bacteria</taxon>
        <taxon>Pseudomonadati</taxon>
        <taxon>Pseudomonadota</taxon>
        <taxon>Gammaproteobacteria</taxon>
        <taxon>Enterobacterales</taxon>
        <taxon>Enterobacteriaceae</taxon>
        <taxon>Escherichia</taxon>
    </lineage>
</organism>
<gene>
    <name type="primary">ybbJ</name>
    <name type="ordered locus">b0488</name>
    <name type="ordered locus">JW5065</name>
</gene>